<gene>
    <name evidence="1" type="primary">hisS</name>
    <name type="ordered locus">SPCG_2088</name>
</gene>
<keyword id="KW-0030">Aminoacyl-tRNA synthetase</keyword>
<keyword id="KW-0067">ATP-binding</keyword>
<keyword id="KW-0963">Cytoplasm</keyword>
<keyword id="KW-0436">Ligase</keyword>
<keyword id="KW-0547">Nucleotide-binding</keyword>
<keyword id="KW-0648">Protein biosynthesis</keyword>
<name>SYH_STRPS</name>
<protein>
    <recommendedName>
        <fullName evidence="1">Histidine--tRNA ligase</fullName>
        <ecNumber evidence="1">6.1.1.21</ecNumber>
    </recommendedName>
    <alternativeName>
        <fullName evidence="1">Histidyl-tRNA synthetase</fullName>
        <shortName evidence="1">HisRS</shortName>
    </alternativeName>
</protein>
<organism>
    <name type="scientific">Streptococcus pneumoniae (strain CGSP14)</name>
    <dbReference type="NCBI Taxonomy" id="516950"/>
    <lineage>
        <taxon>Bacteria</taxon>
        <taxon>Bacillati</taxon>
        <taxon>Bacillota</taxon>
        <taxon>Bacilli</taxon>
        <taxon>Lactobacillales</taxon>
        <taxon>Streptococcaceae</taxon>
        <taxon>Streptococcus</taxon>
    </lineage>
</organism>
<proteinExistence type="inferred from homology"/>
<accession>B2IN41</accession>
<evidence type="ECO:0000255" key="1">
    <source>
        <dbReference type="HAMAP-Rule" id="MF_00127"/>
    </source>
</evidence>
<reference key="1">
    <citation type="journal article" date="2009" name="BMC Genomics">
        <title>Genome evolution driven by host adaptations results in a more virulent and antimicrobial-resistant Streptococcus pneumoniae serotype 14.</title>
        <authorList>
            <person name="Ding F."/>
            <person name="Tang P."/>
            <person name="Hsu M.-H."/>
            <person name="Cui P."/>
            <person name="Hu S."/>
            <person name="Yu J."/>
            <person name="Chiu C.-H."/>
        </authorList>
    </citation>
    <scope>NUCLEOTIDE SEQUENCE [LARGE SCALE GENOMIC DNA]</scope>
    <source>
        <strain>CGSP14</strain>
    </source>
</reference>
<comment type="catalytic activity">
    <reaction evidence="1">
        <text>tRNA(His) + L-histidine + ATP = L-histidyl-tRNA(His) + AMP + diphosphate + H(+)</text>
        <dbReference type="Rhea" id="RHEA:17313"/>
        <dbReference type="Rhea" id="RHEA-COMP:9665"/>
        <dbReference type="Rhea" id="RHEA-COMP:9689"/>
        <dbReference type="ChEBI" id="CHEBI:15378"/>
        <dbReference type="ChEBI" id="CHEBI:30616"/>
        <dbReference type="ChEBI" id="CHEBI:33019"/>
        <dbReference type="ChEBI" id="CHEBI:57595"/>
        <dbReference type="ChEBI" id="CHEBI:78442"/>
        <dbReference type="ChEBI" id="CHEBI:78527"/>
        <dbReference type="ChEBI" id="CHEBI:456215"/>
        <dbReference type="EC" id="6.1.1.21"/>
    </reaction>
</comment>
<comment type="subunit">
    <text evidence="1">Homodimer.</text>
</comment>
<comment type="subcellular location">
    <subcellularLocation>
        <location evidence="1">Cytoplasm</location>
    </subcellularLocation>
</comment>
<comment type="similarity">
    <text evidence="1">Belongs to the class-II aminoacyl-tRNA synthetase family.</text>
</comment>
<dbReference type="EC" id="6.1.1.21" evidence="1"/>
<dbReference type="EMBL" id="CP001033">
    <property type="protein sequence ID" value="ACB91340.1"/>
    <property type="molecule type" value="Genomic_DNA"/>
</dbReference>
<dbReference type="RefSeq" id="WP_000775914.1">
    <property type="nucleotide sequence ID" value="NC_010582.1"/>
</dbReference>
<dbReference type="SMR" id="B2IN41"/>
<dbReference type="KEGG" id="spw:SPCG_2088"/>
<dbReference type="HOGENOM" id="CLU_025113_1_1_9"/>
<dbReference type="GO" id="GO:0005737">
    <property type="term" value="C:cytoplasm"/>
    <property type="evidence" value="ECO:0007669"/>
    <property type="project" value="UniProtKB-SubCell"/>
</dbReference>
<dbReference type="GO" id="GO:0005524">
    <property type="term" value="F:ATP binding"/>
    <property type="evidence" value="ECO:0007669"/>
    <property type="project" value="UniProtKB-UniRule"/>
</dbReference>
<dbReference type="GO" id="GO:0140096">
    <property type="term" value="F:catalytic activity, acting on a protein"/>
    <property type="evidence" value="ECO:0007669"/>
    <property type="project" value="UniProtKB-ARBA"/>
</dbReference>
<dbReference type="GO" id="GO:0004821">
    <property type="term" value="F:histidine-tRNA ligase activity"/>
    <property type="evidence" value="ECO:0007669"/>
    <property type="project" value="UniProtKB-UniRule"/>
</dbReference>
<dbReference type="GO" id="GO:0016740">
    <property type="term" value="F:transferase activity"/>
    <property type="evidence" value="ECO:0007669"/>
    <property type="project" value="UniProtKB-ARBA"/>
</dbReference>
<dbReference type="GO" id="GO:0006427">
    <property type="term" value="P:histidyl-tRNA aminoacylation"/>
    <property type="evidence" value="ECO:0007669"/>
    <property type="project" value="UniProtKB-UniRule"/>
</dbReference>
<dbReference type="CDD" id="cd00773">
    <property type="entry name" value="HisRS-like_core"/>
    <property type="match status" value="1"/>
</dbReference>
<dbReference type="CDD" id="cd00859">
    <property type="entry name" value="HisRS_anticodon"/>
    <property type="match status" value="1"/>
</dbReference>
<dbReference type="FunFam" id="3.30.930.10:FF:000005">
    <property type="entry name" value="Histidine--tRNA ligase"/>
    <property type="match status" value="1"/>
</dbReference>
<dbReference type="FunFam" id="3.40.50.800:FF:000022">
    <property type="entry name" value="Histidine--tRNA ligase"/>
    <property type="match status" value="1"/>
</dbReference>
<dbReference type="Gene3D" id="3.40.50.800">
    <property type="entry name" value="Anticodon-binding domain"/>
    <property type="match status" value="1"/>
</dbReference>
<dbReference type="Gene3D" id="3.30.930.10">
    <property type="entry name" value="Bira Bifunctional Protein, Domain 2"/>
    <property type="match status" value="1"/>
</dbReference>
<dbReference type="HAMAP" id="MF_00127">
    <property type="entry name" value="His_tRNA_synth"/>
    <property type="match status" value="1"/>
</dbReference>
<dbReference type="InterPro" id="IPR006195">
    <property type="entry name" value="aa-tRNA-synth_II"/>
</dbReference>
<dbReference type="InterPro" id="IPR045864">
    <property type="entry name" value="aa-tRNA-synth_II/BPL/LPL"/>
</dbReference>
<dbReference type="InterPro" id="IPR004154">
    <property type="entry name" value="Anticodon-bd"/>
</dbReference>
<dbReference type="InterPro" id="IPR036621">
    <property type="entry name" value="Anticodon-bd_dom_sf"/>
</dbReference>
<dbReference type="InterPro" id="IPR015807">
    <property type="entry name" value="His-tRNA-ligase"/>
</dbReference>
<dbReference type="InterPro" id="IPR041715">
    <property type="entry name" value="HisRS-like_core"/>
</dbReference>
<dbReference type="InterPro" id="IPR004516">
    <property type="entry name" value="HisRS/HisZ"/>
</dbReference>
<dbReference type="InterPro" id="IPR033656">
    <property type="entry name" value="HisRS_anticodon"/>
</dbReference>
<dbReference type="NCBIfam" id="TIGR00442">
    <property type="entry name" value="hisS"/>
    <property type="match status" value="1"/>
</dbReference>
<dbReference type="PANTHER" id="PTHR43707:SF1">
    <property type="entry name" value="HISTIDINE--TRNA LIGASE, MITOCHONDRIAL-RELATED"/>
    <property type="match status" value="1"/>
</dbReference>
<dbReference type="PANTHER" id="PTHR43707">
    <property type="entry name" value="HISTIDYL-TRNA SYNTHETASE"/>
    <property type="match status" value="1"/>
</dbReference>
<dbReference type="Pfam" id="PF03129">
    <property type="entry name" value="HGTP_anticodon"/>
    <property type="match status" value="1"/>
</dbReference>
<dbReference type="Pfam" id="PF13393">
    <property type="entry name" value="tRNA-synt_His"/>
    <property type="match status" value="1"/>
</dbReference>
<dbReference type="PIRSF" id="PIRSF001549">
    <property type="entry name" value="His-tRNA_synth"/>
    <property type="match status" value="1"/>
</dbReference>
<dbReference type="SUPFAM" id="SSF52954">
    <property type="entry name" value="Class II aaRS ABD-related"/>
    <property type="match status" value="1"/>
</dbReference>
<dbReference type="SUPFAM" id="SSF55681">
    <property type="entry name" value="Class II aaRS and biotin synthetases"/>
    <property type="match status" value="1"/>
</dbReference>
<dbReference type="PROSITE" id="PS50862">
    <property type="entry name" value="AA_TRNA_LIGASE_II"/>
    <property type="match status" value="1"/>
</dbReference>
<sequence length="429" mass="48754">MKLQKPKGTQDILPPESAKWQYVEGFAREIFKRYNYAEVRTPIFEHYEVISRSVGDTTDIVTKEMYDFYDKGDRHITLRPEGTAPVVRSYVENKLFAPEVQKPSKFYYMGPMFRYERPQAGRLRQFHQIGVECFGSSNPATDVETIAMAAHFLKEIGIQGVKLHLNTLGNPESRAAYRQALIDYLTPLKETLSKDSQRRLEENPLRVLDSKEKEDKEAVENAPSILDFLDEESQAHFDAVRQMLENLGVDYIIDTNMVRGLDYYNHTIFEFITEIEGNDLTVCAGGRYDGLVSYFGGPETAGFGFGLGVERLLLILEKQGVTLPIENALDVYIAVLGEGANIKALELVQALRQQGFKAERDYLNRKLKAQFKSADVFVAKTLITLGESEVESGQVTVKNNQTREEVQVSLETISQNFSEIFEKLGFYTQ</sequence>
<feature type="chain" id="PRO_1000095601" description="Histidine--tRNA ligase">
    <location>
        <begin position="1"/>
        <end position="429"/>
    </location>
</feature>